<gene>
    <name evidence="1" type="primary">fusA</name>
    <name type="ordered locus">M1627_1463</name>
</gene>
<reference key="1">
    <citation type="journal article" date="2009" name="Proc. Natl. Acad. Sci. U.S.A.">
        <title>Biogeography of the Sulfolobus islandicus pan-genome.</title>
        <authorList>
            <person name="Reno M.L."/>
            <person name="Held N.L."/>
            <person name="Fields C.J."/>
            <person name="Burke P.V."/>
            <person name="Whitaker R.J."/>
        </authorList>
    </citation>
    <scope>NUCLEOTIDE SEQUENCE [LARGE SCALE GENOMIC DNA]</scope>
    <source>
        <strain>M.16.27</strain>
    </source>
</reference>
<organism>
    <name type="scientific">Saccharolobus islandicus (strain M.16.27)</name>
    <name type="common">Sulfolobus islandicus</name>
    <dbReference type="NCBI Taxonomy" id="427318"/>
    <lineage>
        <taxon>Archaea</taxon>
        <taxon>Thermoproteota</taxon>
        <taxon>Thermoprotei</taxon>
        <taxon>Sulfolobales</taxon>
        <taxon>Sulfolobaceae</taxon>
        <taxon>Saccharolobus</taxon>
    </lineage>
</organism>
<accession>C3N5S0</accession>
<comment type="function">
    <text evidence="1">Catalyzes the GTP-dependent ribosomal translocation step during translation elongation. During this step, the ribosome changes from the pre-translocational (PRE) to the post-translocational (POST) state as the newly formed A-site-bound peptidyl-tRNA and P-site-bound deacylated tRNA move to the P and E sites, respectively. Catalyzes the coordinated movement of the two tRNA molecules, the mRNA and conformational changes in the ribosome.</text>
</comment>
<comment type="subcellular location">
    <subcellularLocation>
        <location evidence="1">Cytoplasm</location>
    </subcellularLocation>
</comment>
<comment type="similarity">
    <text evidence="1">Belongs to the TRAFAC class translation factor GTPase superfamily. Classic translation factor GTPase family. EF-G/EF-2 subfamily.</text>
</comment>
<dbReference type="EMBL" id="CP001401">
    <property type="protein sequence ID" value="ACP55345.1"/>
    <property type="molecule type" value="Genomic_DNA"/>
</dbReference>
<dbReference type="RefSeq" id="WP_012711411.1">
    <property type="nucleotide sequence ID" value="NC_012632.1"/>
</dbReference>
<dbReference type="SMR" id="C3N5S0"/>
<dbReference type="KEGG" id="sim:M1627_1463"/>
<dbReference type="HOGENOM" id="CLU_002794_11_1_2"/>
<dbReference type="Proteomes" id="UP000002307">
    <property type="component" value="Chromosome"/>
</dbReference>
<dbReference type="GO" id="GO:0005829">
    <property type="term" value="C:cytosol"/>
    <property type="evidence" value="ECO:0007669"/>
    <property type="project" value="TreeGrafter"/>
</dbReference>
<dbReference type="GO" id="GO:1990904">
    <property type="term" value="C:ribonucleoprotein complex"/>
    <property type="evidence" value="ECO:0007669"/>
    <property type="project" value="TreeGrafter"/>
</dbReference>
<dbReference type="GO" id="GO:0005525">
    <property type="term" value="F:GTP binding"/>
    <property type="evidence" value="ECO:0007669"/>
    <property type="project" value="UniProtKB-UniRule"/>
</dbReference>
<dbReference type="GO" id="GO:0003924">
    <property type="term" value="F:GTPase activity"/>
    <property type="evidence" value="ECO:0007669"/>
    <property type="project" value="InterPro"/>
</dbReference>
<dbReference type="GO" id="GO:0003746">
    <property type="term" value="F:translation elongation factor activity"/>
    <property type="evidence" value="ECO:0007669"/>
    <property type="project" value="UniProtKB-UniRule"/>
</dbReference>
<dbReference type="CDD" id="cd01681">
    <property type="entry name" value="aeEF2_snRNP_like_IV"/>
    <property type="match status" value="1"/>
</dbReference>
<dbReference type="CDD" id="cd01885">
    <property type="entry name" value="EF2"/>
    <property type="match status" value="1"/>
</dbReference>
<dbReference type="CDD" id="cd16268">
    <property type="entry name" value="EF2_II"/>
    <property type="match status" value="1"/>
</dbReference>
<dbReference type="CDD" id="cd16261">
    <property type="entry name" value="EF2_snRNP_III"/>
    <property type="match status" value="1"/>
</dbReference>
<dbReference type="CDD" id="cd01514">
    <property type="entry name" value="Elongation_Factor_C"/>
    <property type="match status" value="1"/>
</dbReference>
<dbReference type="FunFam" id="3.30.230.10:FF:000009">
    <property type="entry name" value="116 kDa U5 small nuclear ribonucleoprotein component"/>
    <property type="match status" value="1"/>
</dbReference>
<dbReference type="FunFam" id="3.30.70.240:FF:000010">
    <property type="entry name" value="Elongation factor 2"/>
    <property type="match status" value="1"/>
</dbReference>
<dbReference type="FunFam" id="3.40.50.300:FF:000684">
    <property type="entry name" value="Elongation factor 2"/>
    <property type="match status" value="1"/>
</dbReference>
<dbReference type="FunFam" id="3.30.70.870:FF:000002">
    <property type="entry name" value="Translation elongation factor 2"/>
    <property type="match status" value="1"/>
</dbReference>
<dbReference type="Gene3D" id="3.30.230.10">
    <property type="match status" value="1"/>
</dbReference>
<dbReference type="Gene3D" id="3.30.70.240">
    <property type="match status" value="1"/>
</dbReference>
<dbReference type="Gene3D" id="3.30.70.870">
    <property type="entry name" value="Elongation Factor G (Translational Gtpase), domain 3"/>
    <property type="match status" value="1"/>
</dbReference>
<dbReference type="Gene3D" id="3.40.50.300">
    <property type="entry name" value="P-loop containing nucleotide triphosphate hydrolases"/>
    <property type="match status" value="1"/>
</dbReference>
<dbReference type="Gene3D" id="2.40.30.10">
    <property type="entry name" value="Translation factors"/>
    <property type="match status" value="1"/>
</dbReference>
<dbReference type="HAMAP" id="MF_00054_A">
    <property type="entry name" value="EF_G_EF_2_A"/>
    <property type="match status" value="1"/>
</dbReference>
<dbReference type="InterPro" id="IPR041095">
    <property type="entry name" value="EFG_II"/>
</dbReference>
<dbReference type="InterPro" id="IPR035647">
    <property type="entry name" value="EFG_III/V"/>
</dbReference>
<dbReference type="InterPro" id="IPR000640">
    <property type="entry name" value="EFG_V-like"/>
</dbReference>
<dbReference type="InterPro" id="IPR004161">
    <property type="entry name" value="EFTu-like_2"/>
</dbReference>
<dbReference type="InterPro" id="IPR031157">
    <property type="entry name" value="G_TR_CS"/>
</dbReference>
<dbReference type="InterPro" id="IPR027417">
    <property type="entry name" value="P-loop_NTPase"/>
</dbReference>
<dbReference type="InterPro" id="IPR020568">
    <property type="entry name" value="Ribosomal_Su5_D2-typ_SF"/>
</dbReference>
<dbReference type="InterPro" id="IPR014721">
    <property type="entry name" value="Ribsml_uS5_D2-typ_fold_subgr"/>
</dbReference>
<dbReference type="InterPro" id="IPR005225">
    <property type="entry name" value="Small_GTP-bd"/>
</dbReference>
<dbReference type="InterPro" id="IPR000795">
    <property type="entry name" value="T_Tr_GTP-bd_dom"/>
</dbReference>
<dbReference type="InterPro" id="IPR009000">
    <property type="entry name" value="Transl_B-barrel_sf"/>
</dbReference>
<dbReference type="InterPro" id="IPR004543">
    <property type="entry name" value="Transl_elong_EFG/EF2_arc"/>
</dbReference>
<dbReference type="InterPro" id="IPR005517">
    <property type="entry name" value="Transl_elong_EFG/EF2_IV"/>
</dbReference>
<dbReference type="NCBIfam" id="TIGR00490">
    <property type="entry name" value="aEF-2"/>
    <property type="match status" value="1"/>
</dbReference>
<dbReference type="NCBIfam" id="TIGR00231">
    <property type="entry name" value="small_GTP"/>
    <property type="match status" value="1"/>
</dbReference>
<dbReference type="PANTHER" id="PTHR42908:SF3">
    <property type="entry name" value="ELONGATION FACTOR-LIKE GTPASE 1"/>
    <property type="match status" value="1"/>
</dbReference>
<dbReference type="PANTHER" id="PTHR42908">
    <property type="entry name" value="TRANSLATION ELONGATION FACTOR-RELATED"/>
    <property type="match status" value="1"/>
</dbReference>
<dbReference type="Pfam" id="PF00679">
    <property type="entry name" value="EFG_C"/>
    <property type="match status" value="1"/>
</dbReference>
<dbReference type="Pfam" id="PF14492">
    <property type="entry name" value="EFG_III"/>
    <property type="match status" value="1"/>
</dbReference>
<dbReference type="Pfam" id="PF03764">
    <property type="entry name" value="EFG_IV"/>
    <property type="match status" value="1"/>
</dbReference>
<dbReference type="Pfam" id="PF00009">
    <property type="entry name" value="GTP_EFTU"/>
    <property type="match status" value="1"/>
</dbReference>
<dbReference type="Pfam" id="PF03144">
    <property type="entry name" value="GTP_EFTU_D2"/>
    <property type="match status" value="1"/>
</dbReference>
<dbReference type="PRINTS" id="PR00315">
    <property type="entry name" value="ELONGATNFCT"/>
</dbReference>
<dbReference type="SMART" id="SM00838">
    <property type="entry name" value="EFG_C"/>
    <property type="match status" value="1"/>
</dbReference>
<dbReference type="SMART" id="SM00889">
    <property type="entry name" value="EFG_IV"/>
    <property type="match status" value="1"/>
</dbReference>
<dbReference type="SUPFAM" id="SSF54980">
    <property type="entry name" value="EF-G C-terminal domain-like"/>
    <property type="match status" value="2"/>
</dbReference>
<dbReference type="SUPFAM" id="SSF52540">
    <property type="entry name" value="P-loop containing nucleoside triphosphate hydrolases"/>
    <property type="match status" value="1"/>
</dbReference>
<dbReference type="SUPFAM" id="SSF54211">
    <property type="entry name" value="Ribosomal protein S5 domain 2-like"/>
    <property type="match status" value="1"/>
</dbReference>
<dbReference type="SUPFAM" id="SSF50447">
    <property type="entry name" value="Translation proteins"/>
    <property type="match status" value="1"/>
</dbReference>
<dbReference type="PROSITE" id="PS00301">
    <property type="entry name" value="G_TR_1"/>
    <property type="match status" value="1"/>
</dbReference>
<dbReference type="PROSITE" id="PS51722">
    <property type="entry name" value="G_TR_2"/>
    <property type="match status" value="1"/>
</dbReference>
<proteinExistence type="inferred from homology"/>
<protein>
    <recommendedName>
        <fullName evidence="1">Elongation factor 2</fullName>
        <shortName evidence="1">EF-2</shortName>
    </recommendedName>
</protein>
<sequence length="736" mass="81793">MPRYKTVEQVLSLMKDRTRVRNIGIIAHVDHGKTTTSDTLLAASGIISPKVAGEALALDYLSVEQQRGITVKAANISLYHEAEGKGYVINLIDTPGHVDFSGRVTRSLRVLDGSIVVVDAVEGIMTQTETVLRQSLEERVRPILFINKVDRLVKELKLSPQEMLNRLLDIIRQVNNLIDMYGEPEFKEKWMINPQAGNVIFGSAKDKWGFSLPMAQKKGINMKNVIDAYTASDKSKLEELAAQAPINEALLDAAIKFVPNPIEAQKYRIPKIWKGDLDNELAKAMLNADPNGPIVFMITDMKVDPHAGLVATGRVFSGTLRSGEELWLVNAKTSQRILQVSLYMGPTRELAEEIPAGNIAAVLGLDRARSGETAISVGFSNVQGSFERLHYISEPVVTIAVEPKNPKDLTKMIDALRKLSIEDPNLVVKINEETGEYLLSGMGFLHLEVSLQLLRENYGIDVVTTPPIVVYRESIRAKSQVFEGKSPNKHNKFYLSVEPLNDKTIELISNGTIREDMDSKEMAKILRDEASWDYDEAKRIIAIDENVNVFVDLTSGVQHLREVMDTVLQGFRLAMKEGPLAHEPIRGVKVILHDAVIHEDPAHRGPAQIYPAVRNSIFAGFLTSRPTLLEPIQKLDIRVPADLIGNVTAVITRKRGKILDVSQIANMSRITAEIPVSESYDMASELRGSTGGRAFWGTEFSRWAPVPDSILLDVVTKIRERKGLPKELPKVEDFLS</sequence>
<name>EF2_SACI3</name>
<evidence type="ECO:0000255" key="1">
    <source>
        <dbReference type="HAMAP-Rule" id="MF_00054"/>
    </source>
</evidence>
<keyword id="KW-0963">Cytoplasm</keyword>
<keyword id="KW-0251">Elongation factor</keyword>
<keyword id="KW-0342">GTP-binding</keyword>
<keyword id="KW-0547">Nucleotide-binding</keyword>
<keyword id="KW-0648">Protein biosynthesis</keyword>
<feature type="chain" id="PRO_1000202313" description="Elongation factor 2">
    <location>
        <begin position="1"/>
        <end position="736"/>
    </location>
</feature>
<feature type="domain" description="tr-type G">
    <location>
        <begin position="18"/>
        <end position="234"/>
    </location>
</feature>
<feature type="binding site" evidence="1">
    <location>
        <begin position="27"/>
        <end position="34"/>
    </location>
    <ligand>
        <name>GTP</name>
        <dbReference type="ChEBI" id="CHEBI:37565"/>
    </ligand>
</feature>
<feature type="binding site" evidence="1">
    <location>
        <begin position="93"/>
        <end position="97"/>
    </location>
    <ligand>
        <name>GTP</name>
        <dbReference type="ChEBI" id="CHEBI:37565"/>
    </ligand>
</feature>
<feature type="binding site" evidence="1">
    <location>
        <begin position="147"/>
        <end position="150"/>
    </location>
    <ligand>
        <name>GTP</name>
        <dbReference type="ChEBI" id="CHEBI:37565"/>
    </ligand>
</feature>
<feature type="modified residue" description="Diphthamide" evidence="1">
    <location>
        <position position="603"/>
    </location>
</feature>